<reference key="1">
    <citation type="journal article" date="2008" name="J. Biotechnol.">
        <title>The lifestyle of Corynebacterium urealyticum derived from its complete genome sequence established by pyrosequencing.</title>
        <authorList>
            <person name="Tauch A."/>
            <person name="Trost E."/>
            <person name="Tilker A."/>
            <person name="Ludewig U."/>
            <person name="Schneiker S."/>
            <person name="Goesmann A."/>
            <person name="Arnold W."/>
            <person name="Bekel T."/>
            <person name="Brinkrolf K."/>
            <person name="Brune I."/>
            <person name="Goetker S."/>
            <person name="Kalinowski J."/>
            <person name="Kamp P.-B."/>
            <person name="Lobo F.P."/>
            <person name="Viehoever P."/>
            <person name="Weisshaar B."/>
            <person name="Soriano F."/>
            <person name="Droege M."/>
            <person name="Puehler A."/>
        </authorList>
    </citation>
    <scope>NUCLEOTIDE SEQUENCE [LARGE SCALE GENOMIC DNA]</scope>
    <source>
        <strain>ATCC 43042 / DSM 7109</strain>
    </source>
</reference>
<gene>
    <name evidence="1" type="primary">rpmJ</name>
    <name type="ordered locus">cu1485</name>
</gene>
<keyword id="KW-1185">Reference proteome</keyword>
<keyword id="KW-0687">Ribonucleoprotein</keyword>
<keyword id="KW-0689">Ribosomal protein</keyword>
<accession>B1VI61</accession>
<dbReference type="EMBL" id="AM942444">
    <property type="protein sequence ID" value="CAQ05445.1"/>
    <property type="molecule type" value="Genomic_DNA"/>
</dbReference>
<dbReference type="SMR" id="B1VI61"/>
<dbReference type="STRING" id="504474.cu1485"/>
<dbReference type="KEGG" id="cur:cu1485"/>
<dbReference type="eggNOG" id="COG0257">
    <property type="taxonomic scope" value="Bacteria"/>
</dbReference>
<dbReference type="HOGENOM" id="CLU_135723_3_1_11"/>
<dbReference type="Proteomes" id="UP000001727">
    <property type="component" value="Chromosome"/>
</dbReference>
<dbReference type="GO" id="GO:1990904">
    <property type="term" value="C:ribonucleoprotein complex"/>
    <property type="evidence" value="ECO:0007669"/>
    <property type="project" value="UniProtKB-KW"/>
</dbReference>
<dbReference type="GO" id="GO:0005840">
    <property type="term" value="C:ribosome"/>
    <property type="evidence" value="ECO:0007669"/>
    <property type="project" value="UniProtKB-KW"/>
</dbReference>
<dbReference type="GO" id="GO:0003735">
    <property type="term" value="F:structural constituent of ribosome"/>
    <property type="evidence" value="ECO:0007669"/>
    <property type="project" value="InterPro"/>
</dbReference>
<dbReference type="GO" id="GO:0006412">
    <property type="term" value="P:translation"/>
    <property type="evidence" value="ECO:0007669"/>
    <property type="project" value="UniProtKB-UniRule"/>
</dbReference>
<dbReference type="HAMAP" id="MF_00251">
    <property type="entry name" value="Ribosomal_bL36"/>
    <property type="match status" value="1"/>
</dbReference>
<dbReference type="InterPro" id="IPR000473">
    <property type="entry name" value="Ribosomal_bL36"/>
</dbReference>
<dbReference type="InterPro" id="IPR035977">
    <property type="entry name" value="Ribosomal_bL36_sp"/>
</dbReference>
<dbReference type="InterPro" id="IPR047621">
    <property type="entry name" value="Ribosomal_L36_bact"/>
</dbReference>
<dbReference type="NCBIfam" id="NF002021">
    <property type="entry name" value="PRK00831.1"/>
    <property type="match status" value="1"/>
</dbReference>
<dbReference type="NCBIfam" id="TIGR01022">
    <property type="entry name" value="rpmJ_bact"/>
    <property type="match status" value="1"/>
</dbReference>
<dbReference type="PANTHER" id="PTHR47781">
    <property type="entry name" value="50S RIBOSOMAL PROTEIN L36 2"/>
    <property type="match status" value="1"/>
</dbReference>
<dbReference type="PANTHER" id="PTHR47781:SF1">
    <property type="entry name" value="LARGE RIBOSOMAL SUBUNIT PROTEIN BL36B"/>
    <property type="match status" value="1"/>
</dbReference>
<dbReference type="Pfam" id="PF00444">
    <property type="entry name" value="Ribosomal_L36"/>
    <property type="match status" value="1"/>
</dbReference>
<dbReference type="SUPFAM" id="SSF57840">
    <property type="entry name" value="Ribosomal protein L36"/>
    <property type="match status" value="1"/>
</dbReference>
<comment type="similarity">
    <text evidence="1">Belongs to the bacterial ribosomal protein bL36 family.</text>
</comment>
<feature type="chain" id="PRO_1000101022" description="Large ribosomal subunit protein bL36">
    <location>
        <begin position="1"/>
        <end position="40"/>
    </location>
</feature>
<sequence>MKVRKSLRSLKNKPGAQVVRRHGKVYVINKKDPRFKARQG</sequence>
<evidence type="ECO:0000255" key="1">
    <source>
        <dbReference type="HAMAP-Rule" id="MF_00251"/>
    </source>
</evidence>
<evidence type="ECO:0000305" key="2"/>
<organism>
    <name type="scientific">Corynebacterium urealyticum (strain ATCC 43042 / DSM 7109)</name>
    <dbReference type="NCBI Taxonomy" id="504474"/>
    <lineage>
        <taxon>Bacteria</taxon>
        <taxon>Bacillati</taxon>
        <taxon>Actinomycetota</taxon>
        <taxon>Actinomycetes</taxon>
        <taxon>Mycobacteriales</taxon>
        <taxon>Corynebacteriaceae</taxon>
        <taxon>Corynebacterium</taxon>
    </lineage>
</organism>
<name>RL36_CORU7</name>
<proteinExistence type="inferred from homology"/>
<protein>
    <recommendedName>
        <fullName evidence="1">Large ribosomal subunit protein bL36</fullName>
    </recommendedName>
    <alternativeName>
        <fullName evidence="2">50S ribosomal protein L36</fullName>
    </alternativeName>
</protein>